<protein>
    <recommendedName>
        <fullName>Myosin-10</fullName>
    </recommendedName>
    <alternativeName>
        <fullName>Cellular myosin heavy chain, type B</fullName>
    </alternativeName>
    <alternativeName>
        <fullName>Myosin heavy chain 10</fullName>
    </alternativeName>
    <alternativeName>
        <fullName>Myosin heavy chain, non-muscle IIb</fullName>
    </alternativeName>
    <alternativeName>
        <fullName>Non-muscle myosin heavy chain B</fullName>
        <shortName>NMMHC-B</shortName>
    </alternativeName>
    <alternativeName>
        <fullName>Non-muscle myosin heavy chain IIb</fullName>
        <shortName>NMMHC II-b</shortName>
        <shortName>NMMHC-IIB</shortName>
    </alternativeName>
</protein>
<accession>Q9JLT0</accession>
<organism>
    <name type="scientific">Rattus norvegicus</name>
    <name type="common">Rat</name>
    <dbReference type="NCBI Taxonomy" id="10116"/>
    <lineage>
        <taxon>Eukaryota</taxon>
        <taxon>Metazoa</taxon>
        <taxon>Chordata</taxon>
        <taxon>Craniata</taxon>
        <taxon>Vertebrata</taxon>
        <taxon>Euteleostomi</taxon>
        <taxon>Mammalia</taxon>
        <taxon>Eutheria</taxon>
        <taxon>Euarchontoglires</taxon>
        <taxon>Glires</taxon>
        <taxon>Rodentia</taxon>
        <taxon>Myomorpha</taxon>
        <taxon>Muroidea</taxon>
        <taxon>Muridae</taxon>
        <taxon>Murinae</taxon>
        <taxon>Rattus</taxon>
    </lineage>
</organism>
<name>MYH10_RAT</name>
<sequence length="1976" mass="228965">MAQRTGLEDPERYLFVDRAVIYNPATQADWTAKKLVWIPSERHGFEAASIKEERGDEVMVELAENGKKAMVNKDDIQKMNPPKFSKVEDMAELTCLNEASVLHNLKDRYYSGLIYTYSGLFCVVINPYKNLPIYSENIIEMYRGKKRHEKPPHIYAISESAYRCMLQDRKDQSILCTGESGAGKTENTKKVIQYLAHVASSHKGRKDHNIPGELERQLLQANPILESFGNAKTVKNDNSSRFGKFIRINFDVTGYIVGANIETYLLEKSRAVRQAKDERTFHIFYQLLSGAGEHLKSDLLLEGFNNYRFLSNGYIPIPGQQDKDNFQETMEAMHIMGFSHEEILSMLKVVSSVLQFGNISFKKERNTDQASMPENTVAQKLCHLLGMNVMEFTRAILTPRIKVGRDYVQKAQTKEQADFAVEALAKATYERLFRWLVHRINKALDRTKRQGTSFIGILDIAGFEIFELNSFEQLCINYTNEKLQQLFNHTMFILEQEEYQREGIEWNFIDFGLDLQPCIDLIERPANPPGVLALLDEECWFPKATDKTFVEKLVQEQGSHSKFQKPRQLKDKADFCIIHYAGKVDYKADEWLMKNMDPLNDNVATLLHQSSDRFVAELWKDVDRIVGLDQVTGMTETAFGSAYKTKKGMFRNVGQLYKESLTKLMATLRNTNPNFVRCIIPNHEKRAGKLDPHLVLDQLRCNGVLEGIRICRQGFPNRIVFQEFRQRYEILTPNAIPKGFMDGKQACERMIRALELDPNLYRIGQSKIFFRAGVLAHLEEERDLKITDIIIFFQAVCRGYLARKAFAKKQQQLSALKVLQRNCAAYLKLRHWQWWRVFTKVKPLLQVTRQEEELQAKDEELLKVKEKQTKVEGELEEMERKHQQLLEEKNILAEQLQAETELFAEAEEMRARLAAKKQELEEILHDLESRVEGEEERNQILQNEKKKMQAHIQDLEEQLDEEEGARQKLQLEKVTAEAKIKKMEEEVLLLEDQNSKFIKEKKLMEDRIAECSSQLAEEEEKAKNLAKIRNKQEVMISDLEERLKKEEKTRQELEKAKRKLDGETTDLQDQIAELQAQVDELKVQLTKKEEELQGALARGDDETLHKNNALKVARELQAQIAELQEDFESEKASRNKAEKQKRDLSEELEALKTELEDTLDTTAAQQELRTKREQEVAELKKALEDETKNHEAQIQDMRQRHATALEELSEQLEQAKRFKANLEKNKQGLETDNKELACEVKVLQQVKAESEHKRKKLDAQVQELHAKVSEGDRLRVELAEKANKLQNELDNVSTLLEEAEKKGMKFAKDAAGLESQLQDTQELLQEETRQKLNLSSRIRQLEEEKNSLQEQQEEEEEARKNLEKQVLALQSQLADTKKKVDDDLGTIEGLEEAKKKLLKDVEALSQRLEEKVLAYDKLEKTKNRLQQELDDLTVDLDHQRQIVSNLEKKQKKFDQLLAEEKGISARYAEERDRAEAEAREKETKALSLARALEEALEAKEEFERQNKQLRADMEDLMSSKDDVGKNVHELEKSKRALEQQVEEMRTQLEELEDELQATEDAKLRLEVNMQAMKAQFERDLQTRDEQNEEKKRLLLKQVRELEAELEDERKQRALAVASKKKMEIDLKDLEAQIEAANKARDEVIKQLRKLQAQMKDYQRELEEARASRDEIFAQSKESEKKLKSLEAEILQLQEELASSERARRHAEQERDELADEIANSASGKSALLDEKRRLEARIAQLEEELEEEQSNMELLNDRFRKTTLQVDTLNTELAAERSAAQKSDNARQQLERQNKELKAKLQELEGAVKSKFKATISALEAKIGQLEEQLEQEAKERAAANKLVRRTEKKLKEIFMQVEDERRHADQYKEQMEKANARMKQLKRQLEEAEEEATRANASRRKLQRELDDATEANEGLSREVSTLKNRLRRGGPISFSSSRSGRRQLHIEGASLELSDDDTESKTSDVNETQPPQSE</sequence>
<reference key="1">
    <citation type="journal article" date="2000" name="Biochem. Biophys. Res. Commun.">
        <title>Molecular cloning and functional analysis of the promoter region of rat nonmuscle myosin heavy chain-B gene.</title>
        <authorList>
            <person name="Yam J.W.P."/>
            <person name="Chan K.W."/>
            <person name="Li N."/>
            <person name="Hsiao W.L.W."/>
        </authorList>
    </citation>
    <scope>NUCLEOTIDE SEQUENCE [MRNA]</scope>
    <source>
        <strain>Sprague-Dawley</strain>
        <tissue>Brain</tissue>
    </source>
</reference>
<reference key="2">
    <citation type="journal article" date="2012" name="Nat. Commun.">
        <title>Quantitative maps of protein phosphorylation sites across 14 different rat organs and tissues.</title>
        <authorList>
            <person name="Lundby A."/>
            <person name="Secher A."/>
            <person name="Lage K."/>
            <person name="Nordsborg N.B."/>
            <person name="Dmytriyev A."/>
            <person name="Lundby C."/>
            <person name="Olsen J.V."/>
        </authorList>
    </citation>
    <scope>PHOSPHORYLATION [LARGE SCALE ANALYSIS] AT SER-1145; SER-1952; SER-1956 AND SER-1975</scope>
    <scope>IDENTIFICATION BY MASS SPECTROMETRY [LARGE SCALE ANALYSIS]</scope>
</reference>
<feature type="chain" id="PRO_0000123423" description="Myosin-10">
    <location>
        <begin position="1"/>
        <end position="1976"/>
    </location>
</feature>
<feature type="domain" description="Myosin N-terminal SH3-like" evidence="7">
    <location>
        <begin position="31"/>
        <end position="81"/>
    </location>
</feature>
<feature type="domain" description="Myosin motor" evidence="6">
    <location>
        <begin position="85"/>
        <end position="783"/>
    </location>
</feature>
<feature type="domain" description="IQ" evidence="5">
    <location>
        <begin position="786"/>
        <end position="815"/>
    </location>
</feature>
<feature type="region of interest" description="Actin-binding" evidence="6">
    <location>
        <begin position="661"/>
        <end position="683"/>
    </location>
</feature>
<feature type="region of interest" description="Disordered" evidence="8">
    <location>
        <begin position="1125"/>
        <end position="1175"/>
    </location>
</feature>
<feature type="region of interest" description="Disordered" evidence="8">
    <location>
        <begin position="1697"/>
        <end position="1718"/>
    </location>
</feature>
<feature type="region of interest" description="Disordered" evidence="8">
    <location>
        <begin position="1874"/>
        <end position="1976"/>
    </location>
</feature>
<feature type="coiled-coil region" evidence="4">
    <location>
        <begin position="845"/>
        <end position="1976"/>
    </location>
</feature>
<feature type="compositionally biased region" description="Basic and acidic residues" evidence="8">
    <location>
        <begin position="1129"/>
        <end position="1155"/>
    </location>
</feature>
<feature type="compositionally biased region" description="Basic and acidic residues" evidence="8">
    <location>
        <begin position="1698"/>
        <end position="1708"/>
    </location>
</feature>
<feature type="compositionally biased region" description="Polar residues" evidence="8">
    <location>
        <begin position="1967"/>
        <end position="1976"/>
    </location>
</feature>
<feature type="binding site" evidence="4">
    <location>
        <begin position="178"/>
        <end position="185"/>
    </location>
    <ligand>
        <name>ATP</name>
        <dbReference type="ChEBI" id="CHEBI:30616"/>
    </ligand>
</feature>
<feature type="modified residue" description="Omega-N-methylarginine" evidence="3">
    <location>
        <position position="18"/>
    </location>
</feature>
<feature type="modified residue" description="N6-acetyllysine" evidence="2">
    <location>
        <position position="442"/>
    </location>
</feature>
<feature type="modified residue" description="Phosphoserine" evidence="10">
    <location>
        <position position="1145"/>
    </location>
</feature>
<feature type="modified residue" description="N6-acetyllysine" evidence="3">
    <location>
        <position position="1241"/>
    </location>
</feature>
<feature type="modified residue" description="N6-acetyllysine" evidence="3">
    <location>
        <position position="1301"/>
    </location>
</feature>
<feature type="modified residue" description="N6-acetyllysine" evidence="2">
    <location>
        <position position="1645"/>
    </location>
</feature>
<feature type="modified residue" description="Omega-N-methylarginine" evidence="3">
    <location>
        <position position="1930"/>
    </location>
</feature>
<feature type="modified residue" description="Phosphoserine" evidence="2">
    <location>
        <position position="1935"/>
    </location>
</feature>
<feature type="modified residue" description="Phosphoserine" evidence="2">
    <location>
        <position position="1937"/>
    </location>
</feature>
<feature type="modified residue" description="Phosphoserine" evidence="2">
    <location>
        <position position="1938"/>
    </location>
</feature>
<feature type="modified residue" description="Phosphoserine" evidence="2">
    <location>
        <position position="1939"/>
    </location>
</feature>
<feature type="modified residue" description="Omega-N-methylarginine" evidence="3">
    <location>
        <position position="1940"/>
    </location>
</feature>
<feature type="modified residue" description="Phosphoserine" evidence="10">
    <location>
        <position position="1952"/>
    </location>
</feature>
<feature type="modified residue" description="Phosphoserine" evidence="10">
    <location>
        <position position="1956"/>
    </location>
</feature>
<feature type="modified residue" description="Phosphothreonine" evidence="2">
    <location>
        <position position="1960"/>
    </location>
</feature>
<feature type="modified residue" description="Phosphoserine" evidence="10">
    <location>
        <position position="1975"/>
    </location>
</feature>
<dbReference type="EMBL" id="AF139055">
    <property type="protein sequence ID" value="AAF61445.1"/>
    <property type="molecule type" value="mRNA"/>
</dbReference>
<dbReference type="RefSeq" id="NP_113708.1">
    <property type="nucleotide sequence ID" value="NM_031520.1"/>
</dbReference>
<dbReference type="SMR" id="Q9JLT0"/>
<dbReference type="BioGRID" id="249464">
    <property type="interactions" value="13"/>
</dbReference>
<dbReference type="CORUM" id="Q9JLT0"/>
<dbReference type="FunCoup" id="Q9JLT0">
    <property type="interactions" value="2133"/>
</dbReference>
<dbReference type="IntAct" id="Q9JLT0">
    <property type="interactions" value="2"/>
</dbReference>
<dbReference type="MINT" id="Q9JLT0"/>
<dbReference type="STRING" id="10116.ENSRNOP00000062744"/>
<dbReference type="GlyGen" id="Q9JLT0">
    <property type="glycosylation" value="1 site, 1 O-linked glycan (1 site)"/>
</dbReference>
<dbReference type="iPTMnet" id="Q9JLT0"/>
<dbReference type="PhosphoSitePlus" id="Q9JLT0"/>
<dbReference type="jPOST" id="Q9JLT0"/>
<dbReference type="PaxDb" id="10116-ENSRNOP00000062744"/>
<dbReference type="GeneID" id="79433"/>
<dbReference type="KEGG" id="rno:79433"/>
<dbReference type="UCSC" id="RGD:71000">
    <property type="organism name" value="rat"/>
</dbReference>
<dbReference type="AGR" id="RGD:71000"/>
<dbReference type="CTD" id="4628"/>
<dbReference type="RGD" id="71000">
    <property type="gene designation" value="Myh10"/>
</dbReference>
<dbReference type="eggNOG" id="KOG0160">
    <property type="taxonomic scope" value="Eukaryota"/>
</dbReference>
<dbReference type="eggNOG" id="KOG0161">
    <property type="taxonomic scope" value="Eukaryota"/>
</dbReference>
<dbReference type="InParanoid" id="Q9JLT0"/>
<dbReference type="PhylomeDB" id="Q9JLT0"/>
<dbReference type="Reactome" id="R-RNO-5627123">
    <property type="pathway name" value="RHO GTPases activate PAKs"/>
</dbReference>
<dbReference type="PRO" id="PR:Q9JLT0"/>
<dbReference type="Proteomes" id="UP000002494">
    <property type="component" value="Unplaced"/>
</dbReference>
<dbReference type="GO" id="GO:0042641">
    <property type="term" value="C:actomyosin"/>
    <property type="evidence" value="ECO:0000266"/>
    <property type="project" value="RGD"/>
</dbReference>
<dbReference type="GO" id="GO:0030424">
    <property type="term" value="C:axon"/>
    <property type="evidence" value="ECO:0000266"/>
    <property type="project" value="RGD"/>
</dbReference>
<dbReference type="GO" id="GO:0005903">
    <property type="term" value="C:brush border"/>
    <property type="evidence" value="ECO:0000266"/>
    <property type="project" value="RGD"/>
</dbReference>
<dbReference type="GO" id="GO:0005938">
    <property type="term" value="C:cell cortex"/>
    <property type="evidence" value="ECO:0000266"/>
    <property type="project" value="RGD"/>
</dbReference>
<dbReference type="GO" id="GO:0009986">
    <property type="term" value="C:cell surface"/>
    <property type="evidence" value="ECO:0000266"/>
    <property type="project" value="RGD"/>
</dbReference>
<dbReference type="GO" id="GO:0032154">
    <property type="term" value="C:cleavage furrow"/>
    <property type="evidence" value="ECO:0000266"/>
    <property type="project" value="RGD"/>
</dbReference>
<dbReference type="GO" id="GO:0005737">
    <property type="term" value="C:cytoplasm"/>
    <property type="evidence" value="ECO:0000266"/>
    <property type="project" value="RGD"/>
</dbReference>
<dbReference type="GO" id="GO:0009898">
    <property type="term" value="C:cytoplasmic side of plasma membrane"/>
    <property type="evidence" value="ECO:0000266"/>
    <property type="project" value="RGD"/>
</dbReference>
<dbReference type="GO" id="GO:0005829">
    <property type="term" value="C:cytosol"/>
    <property type="evidence" value="ECO:0000266"/>
    <property type="project" value="RGD"/>
</dbReference>
<dbReference type="GO" id="GO:0043197">
    <property type="term" value="C:dendritic spine"/>
    <property type="evidence" value="ECO:0000266"/>
    <property type="project" value="RGD"/>
</dbReference>
<dbReference type="GO" id="GO:0098978">
    <property type="term" value="C:glutamatergic synapse"/>
    <property type="evidence" value="ECO:0000314"/>
    <property type="project" value="SynGO"/>
</dbReference>
<dbReference type="GO" id="GO:0030426">
    <property type="term" value="C:growth cone"/>
    <property type="evidence" value="ECO:0000266"/>
    <property type="project" value="RGD"/>
</dbReference>
<dbReference type="GO" id="GO:0030027">
    <property type="term" value="C:lamellipodium"/>
    <property type="evidence" value="ECO:0000314"/>
    <property type="project" value="RGD"/>
</dbReference>
<dbReference type="GO" id="GO:0030496">
    <property type="term" value="C:midbody"/>
    <property type="evidence" value="ECO:0000266"/>
    <property type="project" value="RGD"/>
</dbReference>
<dbReference type="GO" id="GO:0016459">
    <property type="term" value="C:myosin complex"/>
    <property type="evidence" value="ECO:0000266"/>
    <property type="project" value="RGD"/>
</dbReference>
<dbReference type="GO" id="GO:0032982">
    <property type="term" value="C:myosin filament"/>
    <property type="evidence" value="ECO:0000318"/>
    <property type="project" value="GO_Central"/>
</dbReference>
<dbReference type="GO" id="GO:0016460">
    <property type="term" value="C:myosin II complex"/>
    <property type="evidence" value="ECO:0000266"/>
    <property type="project" value="RGD"/>
</dbReference>
<dbReference type="GO" id="GO:0097513">
    <property type="term" value="C:myosin II filament"/>
    <property type="evidence" value="ECO:0000266"/>
    <property type="project" value="RGD"/>
</dbReference>
<dbReference type="GO" id="GO:0031594">
    <property type="term" value="C:neuromuscular junction"/>
    <property type="evidence" value="ECO:0000266"/>
    <property type="project" value="RGD"/>
</dbReference>
<dbReference type="GO" id="GO:0043005">
    <property type="term" value="C:neuron projection"/>
    <property type="evidence" value="ECO:0000266"/>
    <property type="project" value="RGD"/>
</dbReference>
<dbReference type="GO" id="GO:0043025">
    <property type="term" value="C:neuronal cell body"/>
    <property type="evidence" value="ECO:0000266"/>
    <property type="project" value="RGD"/>
</dbReference>
<dbReference type="GO" id="GO:0098871">
    <property type="term" value="C:postsynaptic actin cytoskeleton"/>
    <property type="evidence" value="ECO:0000314"/>
    <property type="project" value="SynGO"/>
</dbReference>
<dbReference type="GO" id="GO:0016528">
    <property type="term" value="C:sarcoplasm"/>
    <property type="evidence" value="ECO:0000266"/>
    <property type="project" value="RGD"/>
</dbReference>
<dbReference type="GO" id="GO:0005819">
    <property type="term" value="C:spindle"/>
    <property type="evidence" value="ECO:0000266"/>
    <property type="project" value="RGD"/>
</dbReference>
<dbReference type="GO" id="GO:0001725">
    <property type="term" value="C:stress fiber"/>
    <property type="evidence" value="ECO:0000266"/>
    <property type="project" value="RGD"/>
</dbReference>
<dbReference type="GO" id="GO:0051015">
    <property type="term" value="F:actin filament binding"/>
    <property type="evidence" value="ECO:0000266"/>
    <property type="project" value="RGD"/>
</dbReference>
<dbReference type="GO" id="GO:0043531">
    <property type="term" value="F:ADP binding"/>
    <property type="evidence" value="ECO:0000266"/>
    <property type="project" value="RGD"/>
</dbReference>
<dbReference type="GO" id="GO:0005524">
    <property type="term" value="F:ATP binding"/>
    <property type="evidence" value="ECO:0000266"/>
    <property type="project" value="RGD"/>
</dbReference>
<dbReference type="GO" id="GO:0005516">
    <property type="term" value="F:calmodulin binding"/>
    <property type="evidence" value="ECO:0007669"/>
    <property type="project" value="UniProtKB-KW"/>
</dbReference>
<dbReference type="GO" id="GO:0042802">
    <property type="term" value="F:identical protein binding"/>
    <property type="evidence" value="ECO:0000314"/>
    <property type="project" value="RGD"/>
</dbReference>
<dbReference type="GO" id="GO:0000146">
    <property type="term" value="F:microfilament motor activity"/>
    <property type="evidence" value="ECO:0000266"/>
    <property type="project" value="RGD"/>
</dbReference>
<dbReference type="GO" id="GO:0048027">
    <property type="term" value="F:mRNA 5'-UTR binding"/>
    <property type="evidence" value="ECO:0000266"/>
    <property type="project" value="RGD"/>
</dbReference>
<dbReference type="GO" id="GO:0035613">
    <property type="term" value="F:RNA stem-loop binding"/>
    <property type="evidence" value="ECO:0000266"/>
    <property type="project" value="RGD"/>
</dbReference>
<dbReference type="GO" id="GO:0001618">
    <property type="term" value="F:virus receptor activity"/>
    <property type="evidence" value="ECO:0000266"/>
    <property type="project" value="RGD"/>
</dbReference>
<dbReference type="GO" id="GO:0030036">
    <property type="term" value="P:actin cytoskeleton organization"/>
    <property type="evidence" value="ECO:0000266"/>
    <property type="project" value="RGD"/>
</dbReference>
<dbReference type="GO" id="GO:0051017">
    <property type="term" value="P:actin filament bundle assembly"/>
    <property type="evidence" value="ECO:0000315"/>
    <property type="project" value="RGD"/>
</dbReference>
<dbReference type="GO" id="GO:0070650">
    <property type="term" value="P:actin filament bundle distribution"/>
    <property type="evidence" value="ECO:0000315"/>
    <property type="project" value="RGD"/>
</dbReference>
<dbReference type="GO" id="GO:0030048">
    <property type="term" value="P:actin filament-based movement"/>
    <property type="evidence" value="ECO:0000266"/>
    <property type="project" value="RGD"/>
</dbReference>
<dbReference type="GO" id="GO:0031032">
    <property type="term" value="P:actomyosin structure organization"/>
    <property type="evidence" value="ECO:0000266"/>
    <property type="project" value="RGD"/>
</dbReference>
<dbReference type="GO" id="GO:0007512">
    <property type="term" value="P:adult heart development"/>
    <property type="evidence" value="ECO:0000266"/>
    <property type="project" value="RGD"/>
</dbReference>
<dbReference type="GO" id="GO:0035904">
    <property type="term" value="P:aorta development"/>
    <property type="evidence" value="ECO:0000266"/>
    <property type="project" value="RGD"/>
</dbReference>
<dbReference type="GO" id="GO:0007411">
    <property type="term" value="P:axon guidance"/>
    <property type="evidence" value="ECO:0000266"/>
    <property type="project" value="RGD"/>
</dbReference>
<dbReference type="GO" id="GO:0007409">
    <property type="term" value="P:axonogenesis"/>
    <property type="evidence" value="ECO:0000266"/>
    <property type="project" value="RGD"/>
</dbReference>
<dbReference type="GO" id="GO:0007420">
    <property type="term" value="P:brain development"/>
    <property type="evidence" value="ECO:0000266"/>
    <property type="project" value="RGD"/>
</dbReference>
<dbReference type="GO" id="GO:0060038">
    <property type="term" value="P:cardiac muscle cell proliferation"/>
    <property type="evidence" value="ECO:0000266"/>
    <property type="project" value="RGD"/>
</dbReference>
<dbReference type="GO" id="GO:0055003">
    <property type="term" value="P:cardiac myofibril assembly"/>
    <property type="evidence" value="ECO:0000266"/>
    <property type="project" value="RGD"/>
</dbReference>
<dbReference type="GO" id="GO:0003279">
    <property type="term" value="P:cardiac septum development"/>
    <property type="evidence" value="ECO:0000266"/>
    <property type="project" value="RGD"/>
</dbReference>
<dbReference type="GO" id="GO:0007155">
    <property type="term" value="P:cell adhesion"/>
    <property type="evidence" value="ECO:0000314"/>
    <property type="project" value="RGD"/>
</dbReference>
<dbReference type="GO" id="GO:0021680">
    <property type="term" value="P:cerebellar Purkinje cell layer development"/>
    <property type="evidence" value="ECO:0000266"/>
    <property type="project" value="RGD"/>
</dbReference>
<dbReference type="GO" id="GO:0060976">
    <property type="term" value="P:coronary vasculature development"/>
    <property type="evidence" value="ECO:0000266"/>
    <property type="project" value="RGD"/>
</dbReference>
<dbReference type="GO" id="GO:0006887">
    <property type="term" value="P:exocytosis"/>
    <property type="evidence" value="ECO:0000266"/>
    <property type="project" value="RGD"/>
</dbReference>
<dbReference type="GO" id="GO:0021592">
    <property type="term" value="P:fourth ventricle development"/>
    <property type="evidence" value="ECO:0000266"/>
    <property type="project" value="RGD"/>
</dbReference>
<dbReference type="GO" id="GO:0007507">
    <property type="term" value="P:heart development"/>
    <property type="evidence" value="ECO:0000266"/>
    <property type="project" value="RGD"/>
</dbReference>
<dbReference type="GO" id="GO:0001701">
    <property type="term" value="P:in utero embryonic development"/>
    <property type="evidence" value="ECO:0000266"/>
    <property type="project" value="RGD"/>
</dbReference>
<dbReference type="GO" id="GO:0021670">
    <property type="term" value="P:lateral ventricle development"/>
    <property type="evidence" value="ECO:0000266"/>
    <property type="project" value="RGD"/>
</dbReference>
<dbReference type="GO" id="GO:0000281">
    <property type="term" value="P:mitotic cytokinesis"/>
    <property type="evidence" value="ECO:0000266"/>
    <property type="project" value="RGD"/>
</dbReference>
<dbReference type="GO" id="GO:0030239">
    <property type="term" value="P:myofibril assembly"/>
    <property type="evidence" value="ECO:0000266"/>
    <property type="project" value="RGD"/>
</dbReference>
<dbReference type="GO" id="GO:0050885">
    <property type="term" value="P:neuromuscular process controlling balance"/>
    <property type="evidence" value="ECO:0000266"/>
    <property type="project" value="RGD"/>
</dbReference>
<dbReference type="GO" id="GO:0001764">
    <property type="term" value="P:neuron migration"/>
    <property type="evidence" value="ECO:0000266"/>
    <property type="project" value="RGD"/>
</dbReference>
<dbReference type="GO" id="GO:0031175">
    <property type="term" value="P:neuron projection development"/>
    <property type="evidence" value="ECO:0000266"/>
    <property type="project" value="RGD"/>
</dbReference>
<dbReference type="GO" id="GO:0007097">
    <property type="term" value="P:nuclear migration"/>
    <property type="evidence" value="ECO:0000266"/>
    <property type="project" value="RGD"/>
</dbReference>
<dbReference type="GO" id="GO:0001778">
    <property type="term" value="P:plasma membrane repair"/>
    <property type="evidence" value="ECO:0000266"/>
    <property type="project" value="RGD"/>
</dbReference>
<dbReference type="GO" id="GO:0050714">
    <property type="term" value="P:positive regulation of protein secretion"/>
    <property type="evidence" value="ECO:0000266"/>
    <property type="project" value="RGD"/>
</dbReference>
<dbReference type="GO" id="GO:0098974">
    <property type="term" value="P:postsynaptic actin cytoskeleton organization"/>
    <property type="evidence" value="ECO:0000266"/>
    <property type="project" value="RGD"/>
</dbReference>
<dbReference type="GO" id="GO:0008360">
    <property type="term" value="P:regulation of cell shape"/>
    <property type="evidence" value="ECO:0000266"/>
    <property type="project" value="RGD"/>
</dbReference>
<dbReference type="GO" id="GO:1905274">
    <property type="term" value="P:regulation of modification of postsynaptic actin cytoskeleton"/>
    <property type="evidence" value="ECO:0000314"/>
    <property type="project" value="SynGO"/>
</dbReference>
<dbReference type="GO" id="GO:0060041">
    <property type="term" value="P:retina development in camera-type eye"/>
    <property type="evidence" value="ECO:0000266"/>
    <property type="project" value="RGD"/>
</dbReference>
<dbReference type="GO" id="GO:0006930">
    <property type="term" value="P:substrate-dependent cell migration, cell extension"/>
    <property type="evidence" value="ECO:0000266"/>
    <property type="project" value="RGD"/>
</dbReference>
<dbReference type="GO" id="GO:0046718">
    <property type="term" value="P:symbiont entry into host cell"/>
    <property type="evidence" value="ECO:0000266"/>
    <property type="project" value="RGD"/>
</dbReference>
<dbReference type="GO" id="GO:0021678">
    <property type="term" value="P:third ventricle development"/>
    <property type="evidence" value="ECO:0000266"/>
    <property type="project" value="RGD"/>
</dbReference>
<dbReference type="GO" id="GO:0055015">
    <property type="term" value="P:ventricular cardiac muscle cell development"/>
    <property type="evidence" value="ECO:0000266"/>
    <property type="project" value="RGD"/>
</dbReference>
<dbReference type="CDD" id="cd14920">
    <property type="entry name" value="MYSc_Myh10"/>
    <property type="match status" value="1"/>
</dbReference>
<dbReference type="FunFam" id="2.30.30.360:FF:000001">
    <property type="entry name" value="Myosin heavy chain"/>
    <property type="match status" value="1"/>
</dbReference>
<dbReference type="FunFam" id="1.10.10.820:FF:000002">
    <property type="entry name" value="Myosin heavy chain 10"/>
    <property type="match status" value="1"/>
</dbReference>
<dbReference type="FunFam" id="1.20.120.720:FF:000002">
    <property type="entry name" value="Myosin heavy chain 10"/>
    <property type="match status" value="1"/>
</dbReference>
<dbReference type="FunFam" id="1.20.5.4820:FF:000002">
    <property type="entry name" value="Myosin heavy chain 10"/>
    <property type="match status" value="1"/>
</dbReference>
<dbReference type="FunFam" id="1.20.58.530:FF:000003">
    <property type="entry name" value="Myosin heavy chain 10"/>
    <property type="match status" value="1"/>
</dbReference>
<dbReference type="FunFam" id="1.20.5.340:FF:000008">
    <property type="entry name" value="Myosin heavy chain 11"/>
    <property type="match status" value="1"/>
</dbReference>
<dbReference type="FunFam" id="1.20.5.340:FF:000007">
    <property type="entry name" value="Myosin heavy chain, non-muscle"/>
    <property type="match status" value="1"/>
</dbReference>
<dbReference type="FunFam" id="4.10.270.10:FF:000001">
    <property type="entry name" value="Myosin heavy chain, non-muscle"/>
    <property type="match status" value="1"/>
</dbReference>
<dbReference type="FunFam" id="1.20.5.340:FF:000017">
    <property type="entry name" value="myosin-10 isoform X2"/>
    <property type="match status" value="1"/>
</dbReference>
<dbReference type="FunFam" id="1.20.5.340:FF:000009">
    <property type="entry name" value="myosin-11 isoform X2"/>
    <property type="match status" value="1"/>
</dbReference>
<dbReference type="FunFam" id="3.40.850.10:FF:000101">
    <property type="entry name" value="Slow myosin heavy chain 2"/>
    <property type="match status" value="1"/>
</dbReference>
<dbReference type="Gene3D" id="1.10.10.820">
    <property type="match status" value="1"/>
</dbReference>
<dbReference type="Gene3D" id="1.10.287.1490">
    <property type="match status" value="1"/>
</dbReference>
<dbReference type="Gene3D" id="1.20.5.340">
    <property type="match status" value="5"/>
</dbReference>
<dbReference type="Gene3D" id="1.20.5.4820">
    <property type="match status" value="1"/>
</dbReference>
<dbReference type="Gene3D" id="1.20.58.530">
    <property type="match status" value="1"/>
</dbReference>
<dbReference type="Gene3D" id="6.10.250.2420">
    <property type="match status" value="1"/>
</dbReference>
<dbReference type="Gene3D" id="3.40.850.10">
    <property type="entry name" value="Kinesin motor domain"/>
    <property type="match status" value="1"/>
</dbReference>
<dbReference type="Gene3D" id="2.30.30.360">
    <property type="entry name" value="Myosin S1 fragment, N-terminal"/>
    <property type="match status" value="1"/>
</dbReference>
<dbReference type="Gene3D" id="1.20.120.720">
    <property type="entry name" value="Myosin VI head, motor domain, U50 subdomain"/>
    <property type="match status" value="1"/>
</dbReference>
<dbReference type="InterPro" id="IPR000048">
    <property type="entry name" value="IQ_motif_EF-hand-BS"/>
</dbReference>
<dbReference type="InterPro" id="IPR036961">
    <property type="entry name" value="Kinesin_motor_dom_sf"/>
</dbReference>
<dbReference type="InterPro" id="IPR001609">
    <property type="entry name" value="Myosin_head_motor_dom-like"/>
</dbReference>
<dbReference type="InterPro" id="IPR004009">
    <property type="entry name" value="Myosin_N"/>
</dbReference>
<dbReference type="InterPro" id="IPR008989">
    <property type="entry name" value="Myosin_S1_N"/>
</dbReference>
<dbReference type="InterPro" id="IPR002928">
    <property type="entry name" value="Myosin_tail"/>
</dbReference>
<dbReference type="InterPro" id="IPR027417">
    <property type="entry name" value="P-loop_NTPase"/>
</dbReference>
<dbReference type="PANTHER" id="PTHR45615">
    <property type="entry name" value="MYOSIN HEAVY CHAIN, NON-MUSCLE"/>
    <property type="match status" value="1"/>
</dbReference>
<dbReference type="PANTHER" id="PTHR45615:SF24">
    <property type="entry name" value="MYOSIN-10"/>
    <property type="match status" value="1"/>
</dbReference>
<dbReference type="Pfam" id="PF00612">
    <property type="entry name" value="IQ"/>
    <property type="match status" value="1"/>
</dbReference>
<dbReference type="Pfam" id="PF00063">
    <property type="entry name" value="Myosin_head"/>
    <property type="match status" value="1"/>
</dbReference>
<dbReference type="Pfam" id="PF02736">
    <property type="entry name" value="Myosin_N"/>
    <property type="match status" value="1"/>
</dbReference>
<dbReference type="Pfam" id="PF01576">
    <property type="entry name" value="Myosin_tail_1"/>
    <property type="match status" value="1"/>
</dbReference>
<dbReference type="PRINTS" id="PR00193">
    <property type="entry name" value="MYOSINHEAVY"/>
</dbReference>
<dbReference type="SMART" id="SM00015">
    <property type="entry name" value="IQ"/>
    <property type="match status" value="1"/>
</dbReference>
<dbReference type="SMART" id="SM00242">
    <property type="entry name" value="MYSc"/>
    <property type="match status" value="1"/>
</dbReference>
<dbReference type="SUPFAM" id="SSF90257">
    <property type="entry name" value="Myosin rod fragments"/>
    <property type="match status" value="6"/>
</dbReference>
<dbReference type="SUPFAM" id="SSF50084">
    <property type="entry name" value="Myosin S1 fragment, N-terminal domain"/>
    <property type="match status" value="1"/>
</dbReference>
<dbReference type="SUPFAM" id="SSF52540">
    <property type="entry name" value="P-loop containing nucleoside triphosphate hydrolases"/>
    <property type="match status" value="1"/>
</dbReference>
<dbReference type="PROSITE" id="PS50096">
    <property type="entry name" value="IQ"/>
    <property type="match status" value="1"/>
</dbReference>
<dbReference type="PROSITE" id="PS51456">
    <property type="entry name" value="MYOSIN_MOTOR"/>
    <property type="match status" value="1"/>
</dbReference>
<dbReference type="PROSITE" id="PS51844">
    <property type="entry name" value="SH3_LIKE"/>
    <property type="match status" value="1"/>
</dbReference>
<comment type="function">
    <text evidence="1">Involved with LARP6 in the stabilization of type I collagen mRNAs for CO1A1 and CO1A2. During cell spreading, plays an important role in cytoskeleton reorganization, focal contacts formation (in the central part but not the margins of spreading cells), and lamellipodial extension; this function is mechanically antagonized by MYH9 (By similarity). Cellular myosin that appears to play a role in cytokinesis, cell shape, and specialized functions such as secretion and capping.</text>
</comment>
<comment type="subunit">
    <text evidence="2 3">Myosin is a hexameric protein that consists of 2 heavy chain subunits (MHC), 2 alkali light chain subunits (MLC) and 2 regulatory light chain subunits (MLC-2). Interacts with PLEKHG6. Interacts with ECPAS (By similarity). Interacts with KIF26B (By similarity). Interacts with LARP6. Interacts with MCC. Interacts with CFAP95 (By similarity).</text>
</comment>
<comment type="subcellular location">
    <subcellularLocation>
        <location evidence="1">Cell projection</location>
        <location evidence="1">Lamellipodium</location>
    </subcellularLocation>
    <text evidence="1">Colocalizes with MCC at the leading edge of migrating cells.</text>
</comment>
<comment type="domain">
    <text>The rodlike tail sequence is highly repetitive, showing cycles of a 28-residue repeat pattern composed of 4 heptapeptides, characteristic for alpha-helical coiled coils.</text>
</comment>
<comment type="PTM">
    <text evidence="1">Phosphorylated by ABL2.</text>
</comment>
<comment type="similarity">
    <text evidence="9">Belongs to the TRAFAC class myosin-kinesin ATPase superfamily. Myosin family.</text>
</comment>
<comment type="caution">
    <text evidence="9">Represents a conventional non-muscle myosin. This protein should not be confused with the unconventional myosin-10 (MYO10).</text>
</comment>
<proteinExistence type="evidence at protein level"/>
<evidence type="ECO:0000250" key="1"/>
<evidence type="ECO:0000250" key="2">
    <source>
        <dbReference type="UniProtKB" id="P35580"/>
    </source>
</evidence>
<evidence type="ECO:0000250" key="3">
    <source>
        <dbReference type="UniProtKB" id="Q61879"/>
    </source>
</evidence>
<evidence type="ECO:0000255" key="4"/>
<evidence type="ECO:0000255" key="5">
    <source>
        <dbReference type="PROSITE-ProRule" id="PRU00116"/>
    </source>
</evidence>
<evidence type="ECO:0000255" key="6">
    <source>
        <dbReference type="PROSITE-ProRule" id="PRU00782"/>
    </source>
</evidence>
<evidence type="ECO:0000255" key="7">
    <source>
        <dbReference type="PROSITE-ProRule" id="PRU01190"/>
    </source>
</evidence>
<evidence type="ECO:0000256" key="8">
    <source>
        <dbReference type="SAM" id="MobiDB-lite"/>
    </source>
</evidence>
<evidence type="ECO:0000305" key="9"/>
<evidence type="ECO:0007744" key="10">
    <source>
    </source>
</evidence>
<keyword id="KW-0007">Acetylation</keyword>
<keyword id="KW-0009">Actin-binding</keyword>
<keyword id="KW-0067">ATP-binding</keyword>
<keyword id="KW-0112">Calmodulin-binding</keyword>
<keyword id="KW-0130">Cell adhesion</keyword>
<keyword id="KW-0966">Cell projection</keyword>
<keyword id="KW-0133">Cell shape</keyword>
<keyword id="KW-0175">Coiled coil</keyword>
<keyword id="KW-0488">Methylation</keyword>
<keyword id="KW-0505">Motor protein</keyword>
<keyword id="KW-0518">Myosin</keyword>
<keyword id="KW-0547">Nucleotide-binding</keyword>
<keyword id="KW-0597">Phosphoprotein</keyword>
<keyword id="KW-1185">Reference proteome</keyword>
<gene>
    <name type="primary">Myh10</name>
</gene>